<sequence>MRPLLALLLLGLASGSPPLDDNKIPSLCPGQPGLPGTPGHHGSQGLPGRDGRDGRDGAPGAPGEKGEGGRPGLPGPRGEPGPRGEAGPVGAIGPAGECSVPPRSAFSAKRSESRVPPPADTPLPFDRVLLNEQGHYDATTGKFTCQVPGVYYFAVHATVYRASLQFDLVKNGQSIASFFQFFGGWPKPASLSGGAMVRLEPEDQVWVQVGVGDYIGIYASIKTDSTFSGFLVYSDWHSSPVFA</sequence>
<name>C1QT5_RAT</name>
<gene>
    <name type="primary">C1qtnf5</name>
    <name type="synonym">Ctrp5</name>
</gene>
<reference key="1">
    <citation type="journal article" date="2004" name="Genome Res.">
        <title>The status, quality, and expansion of the NIH full-length cDNA project: the Mammalian Gene Collection (MGC).</title>
        <authorList>
            <consortium name="The MGC Project Team"/>
        </authorList>
    </citation>
    <scope>NUCLEOTIDE SEQUENCE [LARGE SCALE MRNA]</scope>
    <source>
        <tissue>Brain</tissue>
    </source>
</reference>
<proteinExistence type="evidence at transcript level"/>
<feature type="signal peptide" evidence="1">
    <location>
        <begin position="1"/>
        <end position="15"/>
    </location>
</feature>
<feature type="chain" id="PRO_0000003537" description="Complement C1q tumor necrosis factor-related protein 5">
    <location>
        <begin position="16"/>
        <end position="243"/>
    </location>
</feature>
<feature type="domain" description="Collagen-like">
    <location>
        <begin position="30"/>
        <end position="95"/>
    </location>
</feature>
<feature type="domain" description="C1q" evidence="2">
    <location>
        <begin position="99"/>
        <end position="238"/>
    </location>
</feature>
<feature type="region of interest" description="Disordered" evidence="3">
    <location>
        <begin position="15"/>
        <end position="124"/>
    </location>
</feature>
<accession>Q5FVH0</accession>
<keyword id="KW-0176">Collagen</keyword>
<keyword id="KW-1185">Reference proteome</keyword>
<keyword id="KW-0964">Secreted</keyword>
<keyword id="KW-0732">Signal</keyword>
<organism>
    <name type="scientific">Rattus norvegicus</name>
    <name type="common">Rat</name>
    <dbReference type="NCBI Taxonomy" id="10116"/>
    <lineage>
        <taxon>Eukaryota</taxon>
        <taxon>Metazoa</taxon>
        <taxon>Chordata</taxon>
        <taxon>Craniata</taxon>
        <taxon>Vertebrata</taxon>
        <taxon>Euteleostomi</taxon>
        <taxon>Mammalia</taxon>
        <taxon>Eutheria</taxon>
        <taxon>Euarchontoglires</taxon>
        <taxon>Glires</taxon>
        <taxon>Rodentia</taxon>
        <taxon>Myomorpha</taxon>
        <taxon>Muroidea</taxon>
        <taxon>Muridae</taxon>
        <taxon>Murinae</taxon>
        <taxon>Rattus</taxon>
    </lineage>
</organism>
<comment type="subunit">
    <text evidence="1">Homotrimer (via collagen-like domain). May form higher order oligomers by supercoiling of the trimers. May interact with ERFE (By similarity).</text>
</comment>
<comment type="subcellular location">
    <subcellularLocation>
        <location evidence="4">Secreted</location>
    </subcellularLocation>
</comment>
<protein>
    <recommendedName>
        <fullName>Complement C1q tumor necrosis factor-related protein 5</fullName>
    </recommendedName>
</protein>
<evidence type="ECO:0000250" key="1"/>
<evidence type="ECO:0000255" key="2">
    <source>
        <dbReference type="PROSITE-ProRule" id="PRU00368"/>
    </source>
</evidence>
<evidence type="ECO:0000256" key="3">
    <source>
        <dbReference type="SAM" id="MobiDB-lite"/>
    </source>
</evidence>
<evidence type="ECO:0000305" key="4"/>
<dbReference type="EMBL" id="BC089992">
    <property type="protein sequence ID" value="AAH89992.1"/>
    <property type="molecule type" value="mRNA"/>
</dbReference>
<dbReference type="RefSeq" id="NP_001012123.1">
    <property type="nucleotide sequence ID" value="NM_001012123.1"/>
</dbReference>
<dbReference type="RefSeq" id="XP_017451111.1">
    <property type="nucleotide sequence ID" value="XM_017595622.3"/>
</dbReference>
<dbReference type="SMR" id="Q5FVH0"/>
<dbReference type="FunCoup" id="Q5FVH0">
    <property type="interactions" value="91"/>
</dbReference>
<dbReference type="IntAct" id="Q5FVH0">
    <property type="interactions" value="1"/>
</dbReference>
<dbReference type="STRING" id="10116.ENSRNOP00000010127"/>
<dbReference type="GlyGen" id="Q5FVH0">
    <property type="glycosylation" value="1 site"/>
</dbReference>
<dbReference type="PhosphoSitePlus" id="Q5FVH0"/>
<dbReference type="PaxDb" id="10116-ENSRNOP00000010127"/>
<dbReference type="Ensembl" id="ENSRNOT00000010127.6">
    <property type="protein sequence ID" value="ENSRNOP00000010127.4"/>
    <property type="gene ID" value="ENSRNOG00000007613.6"/>
</dbReference>
<dbReference type="GeneID" id="315598"/>
<dbReference type="KEGG" id="rno:315598"/>
<dbReference type="UCSC" id="RGD:1308802">
    <property type="organism name" value="rat"/>
</dbReference>
<dbReference type="AGR" id="RGD:1308802"/>
<dbReference type="CTD" id="114902"/>
<dbReference type="RGD" id="1308802">
    <property type="gene designation" value="C1qtnf5"/>
</dbReference>
<dbReference type="eggNOG" id="ENOG502QUEA">
    <property type="taxonomic scope" value="Eukaryota"/>
</dbReference>
<dbReference type="GeneTree" id="ENSGT00940000161353"/>
<dbReference type="HOGENOM" id="CLU_001074_0_2_1"/>
<dbReference type="InParanoid" id="Q5FVH0"/>
<dbReference type="OMA" id="FFQYYGN"/>
<dbReference type="OrthoDB" id="6090657at2759"/>
<dbReference type="PhylomeDB" id="Q5FVH0"/>
<dbReference type="TreeFam" id="TF329591"/>
<dbReference type="PRO" id="PR:Q5FVH0"/>
<dbReference type="Proteomes" id="UP000002494">
    <property type="component" value="Chromosome 8"/>
</dbReference>
<dbReference type="Bgee" id="ENSRNOG00000007613">
    <property type="expression patterns" value="Expressed in ovary and 19 other cell types or tissues"/>
</dbReference>
<dbReference type="ExpressionAtlas" id="Q5FVH0">
    <property type="expression patterns" value="baseline and differential"/>
</dbReference>
<dbReference type="GO" id="GO:0016324">
    <property type="term" value="C:apical plasma membrane"/>
    <property type="evidence" value="ECO:0000266"/>
    <property type="project" value="RGD"/>
</dbReference>
<dbReference type="GO" id="GO:0005923">
    <property type="term" value="C:bicellular tight junction"/>
    <property type="evidence" value="ECO:0000266"/>
    <property type="project" value="RGD"/>
</dbReference>
<dbReference type="GO" id="GO:0042995">
    <property type="term" value="C:cell projection"/>
    <property type="evidence" value="ECO:0000266"/>
    <property type="project" value="RGD"/>
</dbReference>
<dbReference type="GO" id="GO:0005581">
    <property type="term" value="C:collagen trimer"/>
    <property type="evidence" value="ECO:0007669"/>
    <property type="project" value="UniProtKB-KW"/>
</dbReference>
<dbReference type="GO" id="GO:0005576">
    <property type="term" value="C:extracellular region"/>
    <property type="evidence" value="ECO:0000266"/>
    <property type="project" value="RGD"/>
</dbReference>
<dbReference type="GO" id="GO:0005615">
    <property type="term" value="C:extracellular space"/>
    <property type="evidence" value="ECO:0000266"/>
    <property type="project" value="RGD"/>
</dbReference>
<dbReference type="GO" id="GO:0016328">
    <property type="term" value="C:lateral plasma membrane"/>
    <property type="evidence" value="ECO:0000266"/>
    <property type="project" value="RGD"/>
</dbReference>
<dbReference type="GO" id="GO:0016020">
    <property type="term" value="C:membrane"/>
    <property type="evidence" value="ECO:0000266"/>
    <property type="project" value="RGD"/>
</dbReference>
<dbReference type="GO" id="GO:0005886">
    <property type="term" value="C:plasma membrane"/>
    <property type="evidence" value="ECO:0000266"/>
    <property type="project" value="RGD"/>
</dbReference>
<dbReference type="GO" id="GO:0032991">
    <property type="term" value="C:protein-containing complex"/>
    <property type="evidence" value="ECO:0000266"/>
    <property type="project" value="RGD"/>
</dbReference>
<dbReference type="GO" id="GO:0030133">
    <property type="term" value="C:transport vesicle"/>
    <property type="evidence" value="ECO:0000266"/>
    <property type="project" value="RGD"/>
</dbReference>
<dbReference type="GO" id="GO:0042802">
    <property type="term" value="F:identical protein binding"/>
    <property type="evidence" value="ECO:0000266"/>
    <property type="project" value="RGD"/>
</dbReference>
<dbReference type="GO" id="GO:0048839">
    <property type="term" value="P:inner ear development"/>
    <property type="evidence" value="ECO:0000266"/>
    <property type="project" value="RGD"/>
</dbReference>
<dbReference type="GO" id="GO:0009306">
    <property type="term" value="P:protein secretion"/>
    <property type="evidence" value="ECO:0000266"/>
    <property type="project" value="RGD"/>
</dbReference>
<dbReference type="FunFam" id="2.60.120.40:FF:000001">
    <property type="entry name" value="Complement C1q B chain"/>
    <property type="match status" value="1"/>
</dbReference>
<dbReference type="Gene3D" id="2.60.120.40">
    <property type="match status" value="1"/>
</dbReference>
<dbReference type="InterPro" id="IPR001073">
    <property type="entry name" value="C1q_dom"/>
</dbReference>
<dbReference type="InterPro" id="IPR008160">
    <property type="entry name" value="Collagen"/>
</dbReference>
<dbReference type="InterPro" id="IPR050392">
    <property type="entry name" value="Collagen/C1q_domain"/>
</dbReference>
<dbReference type="InterPro" id="IPR008983">
    <property type="entry name" value="Tumour_necrosis_fac-like_dom"/>
</dbReference>
<dbReference type="PANTHER" id="PTHR15427:SF27">
    <property type="entry name" value="COMPLEMENT C1Q TUMOR NECROSIS FACTOR-RELATED PROTEIN 5"/>
    <property type="match status" value="1"/>
</dbReference>
<dbReference type="PANTHER" id="PTHR15427">
    <property type="entry name" value="EMILIN ELASTIN MICROFIBRIL INTERFACE-LOCATED PROTEIN ELASTIN MICROFIBRIL INTERFACER"/>
    <property type="match status" value="1"/>
</dbReference>
<dbReference type="Pfam" id="PF00386">
    <property type="entry name" value="C1q"/>
    <property type="match status" value="1"/>
</dbReference>
<dbReference type="Pfam" id="PF01391">
    <property type="entry name" value="Collagen"/>
    <property type="match status" value="2"/>
</dbReference>
<dbReference type="PRINTS" id="PR00007">
    <property type="entry name" value="COMPLEMNTC1Q"/>
</dbReference>
<dbReference type="SMART" id="SM00110">
    <property type="entry name" value="C1Q"/>
    <property type="match status" value="1"/>
</dbReference>
<dbReference type="SUPFAM" id="SSF49842">
    <property type="entry name" value="TNF-like"/>
    <property type="match status" value="1"/>
</dbReference>
<dbReference type="PROSITE" id="PS50871">
    <property type="entry name" value="C1Q"/>
    <property type="match status" value="1"/>
</dbReference>